<feature type="chain" id="PRO_0000384849" description="Uncharacterized protein ORF107a">
    <location>
        <begin position="1"/>
        <end position="107"/>
    </location>
</feature>
<gene>
    <name type="ORF">ORF107a</name>
</gene>
<accession>A4ZUE1</accession>
<name>Y107A_ABVP</name>
<organismHost>
    <name type="scientific">Acidianus convivator</name>
    <dbReference type="NCBI Taxonomy" id="269667"/>
</organismHost>
<organism>
    <name type="scientific">Acidianus bottle-shaped virus (isolate Italy/Pozzuoli)</name>
    <name type="common">ABV</name>
    <dbReference type="NCBI Taxonomy" id="654911"/>
    <lineage>
        <taxon>Viruses</taxon>
        <taxon>Viruses incertae sedis</taxon>
        <taxon>Ampullaviridae</taxon>
        <taxon>Bottigliavirus</taxon>
        <taxon>Bottigliavirus ABV</taxon>
    </lineage>
</organism>
<reference key="1">
    <citation type="journal article" date="2007" name="Virology">
        <title>Genome of the Acidianus bottle-shaped virus and insights into the replication and packaging mechanisms.</title>
        <authorList>
            <person name="Peng X."/>
            <person name="Basta T."/>
            <person name="Haring M."/>
            <person name="Garrett R.A."/>
            <person name="Prangishvili D."/>
        </authorList>
    </citation>
    <scope>NUCLEOTIDE SEQUENCE [GENOMIC DNA]</scope>
</reference>
<dbReference type="EMBL" id="EF432053">
    <property type="protein sequence ID" value="ABP73445.1"/>
    <property type="molecule type" value="Genomic_DNA"/>
</dbReference>
<dbReference type="SMR" id="A4ZUE1"/>
<dbReference type="KEGG" id="vg:5129836"/>
<dbReference type="Proteomes" id="UP000000513">
    <property type="component" value="Segment"/>
</dbReference>
<proteinExistence type="predicted"/>
<keyword id="KW-1185">Reference proteome</keyword>
<protein>
    <recommendedName>
        <fullName>Uncharacterized protein ORF107a</fullName>
    </recommendedName>
</protein>
<sequence length="107" mass="12646">MIEENVKKFNQIIDDLLERSKNTYVYDPDIYKDIRNAQIFLVKFAQSDINPECIDILHKAFQTLSDAYYVVRWYVKQDKRHVVRVLKEKFNTAKDLVSGINSEICGE</sequence>